<proteinExistence type="inferred from homology"/>
<keyword id="KW-0963">Cytoplasm</keyword>
<keyword id="KW-0312">Gluconeogenesis</keyword>
<keyword id="KW-0324">Glycolysis</keyword>
<keyword id="KW-0413">Isomerase</keyword>
<keyword id="KW-1185">Reference proteome</keyword>
<protein>
    <recommendedName>
        <fullName evidence="1">Triosephosphate isomerase</fullName>
        <shortName evidence="1">TIM</shortName>
        <shortName evidence="1">TPI</shortName>
        <ecNumber evidence="1">5.3.1.1</ecNumber>
    </recommendedName>
    <alternativeName>
        <fullName evidence="1">Triose-phosphate isomerase</fullName>
    </alternativeName>
</protein>
<accession>P9WG42</accession>
<accession>L0T6V2</accession>
<accession>O08408</accession>
<accession>P66940</accession>
<reference key="1">
    <citation type="journal article" date="2002" name="J. Bacteriol.">
        <title>Whole-genome comparison of Mycobacterium tuberculosis clinical and laboratory strains.</title>
        <authorList>
            <person name="Fleischmann R.D."/>
            <person name="Alland D."/>
            <person name="Eisen J.A."/>
            <person name="Carpenter L."/>
            <person name="White O."/>
            <person name="Peterson J.D."/>
            <person name="DeBoy R.T."/>
            <person name="Dodson R.J."/>
            <person name="Gwinn M.L."/>
            <person name="Haft D.H."/>
            <person name="Hickey E.K."/>
            <person name="Kolonay J.F."/>
            <person name="Nelson W.C."/>
            <person name="Umayam L.A."/>
            <person name="Ermolaeva M.D."/>
            <person name="Salzberg S.L."/>
            <person name="Delcher A."/>
            <person name="Utterback T.R."/>
            <person name="Weidman J.F."/>
            <person name="Khouri H.M."/>
            <person name="Gill J."/>
            <person name="Mikula A."/>
            <person name="Bishai W."/>
            <person name="Jacobs W.R. Jr."/>
            <person name="Venter J.C."/>
            <person name="Fraser C.M."/>
        </authorList>
    </citation>
    <scope>NUCLEOTIDE SEQUENCE [LARGE SCALE GENOMIC DNA]</scope>
    <source>
        <strain>CDC 1551 / Oshkosh</strain>
    </source>
</reference>
<comment type="function">
    <text evidence="1">Involved in the gluconeogenesis. Catalyzes stereospecifically the conversion of dihydroxyacetone phosphate (DHAP) to D-glyceraldehyde-3-phosphate (G3P).</text>
</comment>
<comment type="catalytic activity">
    <reaction evidence="1">
        <text>D-glyceraldehyde 3-phosphate = dihydroxyacetone phosphate</text>
        <dbReference type="Rhea" id="RHEA:18585"/>
        <dbReference type="ChEBI" id="CHEBI:57642"/>
        <dbReference type="ChEBI" id="CHEBI:59776"/>
        <dbReference type="EC" id="5.3.1.1"/>
    </reaction>
</comment>
<comment type="pathway">
    <text evidence="1">Carbohydrate biosynthesis; gluconeogenesis.</text>
</comment>
<comment type="pathway">
    <text evidence="1">Carbohydrate degradation; glycolysis; D-glyceraldehyde 3-phosphate from glycerone phosphate: step 1/1.</text>
</comment>
<comment type="subunit">
    <text evidence="1">Homodimer.</text>
</comment>
<comment type="subcellular location">
    <subcellularLocation>
        <location evidence="1">Cytoplasm</location>
    </subcellularLocation>
</comment>
<comment type="similarity">
    <text evidence="1">Belongs to the triosephosphate isomerase family.</text>
</comment>
<feature type="chain" id="PRO_0000428427" description="Triosephosphate isomerase">
    <location>
        <begin position="1"/>
        <end position="261"/>
    </location>
</feature>
<feature type="active site" description="Electrophile" evidence="1">
    <location>
        <position position="100"/>
    </location>
</feature>
<feature type="active site" description="Proton acceptor" evidence="1">
    <location>
        <position position="172"/>
    </location>
</feature>
<feature type="binding site" evidence="1">
    <location>
        <begin position="10"/>
        <end position="12"/>
    </location>
    <ligand>
        <name>substrate</name>
    </ligand>
</feature>
<feature type="binding site" evidence="1">
    <location>
        <position position="178"/>
    </location>
    <ligand>
        <name>substrate</name>
    </ligand>
</feature>
<feature type="binding site" evidence="1">
    <location>
        <position position="218"/>
    </location>
    <ligand>
        <name>substrate</name>
    </ligand>
</feature>
<feature type="binding site" evidence="1">
    <location>
        <begin position="239"/>
        <end position="240"/>
    </location>
    <ligand>
        <name>substrate</name>
    </ligand>
</feature>
<name>TPIS_MYCTO</name>
<organism>
    <name type="scientific">Mycobacterium tuberculosis (strain CDC 1551 / Oshkosh)</name>
    <dbReference type="NCBI Taxonomy" id="83331"/>
    <lineage>
        <taxon>Bacteria</taxon>
        <taxon>Bacillati</taxon>
        <taxon>Actinomycetota</taxon>
        <taxon>Actinomycetes</taxon>
        <taxon>Mycobacteriales</taxon>
        <taxon>Mycobacteriaceae</taxon>
        <taxon>Mycobacterium</taxon>
        <taxon>Mycobacterium tuberculosis complex</taxon>
    </lineage>
</organism>
<gene>
    <name evidence="1" type="primary">tpiA</name>
    <name type="synonym">tpi</name>
    <name type="ordered locus">MT1482</name>
</gene>
<sequence>MSRKPLIAGNWKMNLNHYEAIALVQKIAFSLPDKYYDRVDVAVIPPFTDLRSVQTLVDGDKLRLTYGAQDLSPHDSGAYTGDVSGAFLAKLGCSYVVVGHSERRTYHNEDDALVAAKAATALKHGLTPIVCIGEHLDVREAGNHVAHNIEQLRGSLAGLLAEQIGSVVIAYEPVWAIGTGRVASAADAQEVCAAIRKELASLASPRIADTVRVLYGGSVNAKNVGDIVAQDDVDGGLVGGASLDGEHFATLAAIAAGGPLP</sequence>
<evidence type="ECO:0000255" key="1">
    <source>
        <dbReference type="HAMAP-Rule" id="MF_00147"/>
    </source>
</evidence>
<dbReference type="EC" id="5.3.1.1" evidence="1"/>
<dbReference type="EMBL" id="AE000516">
    <property type="protein sequence ID" value="AAK45747.1"/>
    <property type="molecule type" value="Genomic_DNA"/>
</dbReference>
<dbReference type="PIR" id="A70916">
    <property type="entry name" value="A70916"/>
</dbReference>
<dbReference type="RefSeq" id="WP_003407398.1">
    <property type="nucleotide sequence ID" value="NZ_KK341227.1"/>
</dbReference>
<dbReference type="SMR" id="P9WG42"/>
<dbReference type="KEGG" id="mtc:MT1482"/>
<dbReference type="PATRIC" id="fig|83331.31.peg.1591"/>
<dbReference type="HOGENOM" id="CLU_024251_2_3_11"/>
<dbReference type="UniPathway" id="UPA00109">
    <property type="reaction ID" value="UER00189"/>
</dbReference>
<dbReference type="UniPathway" id="UPA00138"/>
<dbReference type="Proteomes" id="UP000001020">
    <property type="component" value="Chromosome"/>
</dbReference>
<dbReference type="GO" id="GO:0005829">
    <property type="term" value="C:cytosol"/>
    <property type="evidence" value="ECO:0007669"/>
    <property type="project" value="TreeGrafter"/>
</dbReference>
<dbReference type="GO" id="GO:0004807">
    <property type="term" value="F:triose-phosphate isomerase activity"/>
    <property type="evidence" value="ECO:0007669"/>
    <property type="project" value="UniProtKB-UniRule"/>
</dbReference>
<dbReference type="GO" id="GO:0006094">
    <property type="term" value="P:gluconeogenesis"/>
    <property type="evidence" value="ECO:0007669"/>
    <property type="project" value="UniProtKB-UniRule"/>
</dbReference>
<dbReference type="GO" id="GO:0046166">
    <property type="term" value="P:glyceraldehyde-3-phosphate biosynthetic process"/>
    <property type="evidence" value="ECO:0007669"/>
    <property type="project" value="TreeGrafter"/>
</dbReference>
<dbReference type="GO" id="GO:0019563">
    <property type="term" value="P:glycerol catabolic process"/>
    <property type="evidence" value="ECO:0007669"/>
    <property type="project" value="TreeGrafter"/>
</dbReference>
<dbReference type="GO" id="GO:0006096">
    <property type="term" value="P:glycolytic process"/>
    <property type="evidence" value="ECO:0007669"/>
    <property type="project" value="UniProtKB-UniRule"/>
</dbReference>
<dbReference type="CDD" id="cd00311">
    <property type="entry name" value="TIM"/>
    <property type="match status" value="1"/>
</dbReference>
<dbReference type="FunFam" id="3.20.20.70:FF:000020">
    <property type="entry name" value="Triosephosphate isomerase"/>
    <property type="match status" value="1"/>
</dbReference>
<dbReference type="Gene3D" id="3.20.20.70">
    <property type="entry name" value="Aldolase class I"/>
    <property type="match status" value="1"/>
</dbReference>
<dbReference type="HAMAP" id="MF_00147_B">
    <property type="entry name" value="TIM_B"/>
    <property type="match status" value="1"/>
</dbReference>
<dbReference type="InterPro" id="IPR013785">
    <property type="entry name" value="Aldolase_TIM"/>
</dbReference>
<dbReference type="InterPro" id="IPR035990">
    <property type="entry name" value="TIM_sf"/>
</dbReference>
<dbReference type="InterPro" id="IPR022896">
    <property type="entry name" value="TrioseP_Isoase_bac/euk"/>
</dbReference>
<dbReference type="InterPro" id="IPR000652">
    <property type="entry name" value="Triosephosphate_isomerase"/>
</dbReference>
<dbReference type="InterPro" id="IPR020861">
    <property type="entry name" value="Triosephosphate_isomerase_AS"/>
</dbReference>
<dbReference type="NCBIfam" id="TIGR00419">
    <property type="entry name" value="tim"/>
    <property type="match status" value="1"/>
</dbReference>
<dbReference type="PANTHER" id="PTHR21139">
    <property type="entry name" value="TRIOSEPHOSPHATE ISOMERASE"/>
    <property type="match status" value="1"/>
</dbReference>
<dbReference type="PANTHER" id="PTHR21139:SF42">
    <property type="entry name" value="TRIOSEPHOSPHATE ISOMERASE"/>
    <property type="match status" value="1"/>
</dbReference>
<dbReference type="Pfam" id="PF00121">
    <property type="entry name" value="TIM"/>
    <property type="match status" value="1"/>
</dbReference>
<dbReference type="SUPFAM" id="SSF51351">
    <property type="entry name" value="Triosephosphate isomerase (TIM)"/>
    <property type="match status" value="1"/>
</dbReference>
<dbReference type="PROSITE" id="PS00171">
    <property type="entry name" value="TIM_1"/>
    <property type="match status" value="1"/>
</dbReference>
<dbReference type="PROSITE" id="PS51440">
    <property type="entry name" value="TIM_2"/>
    <property type="match status" value="1"/>
</dbReference>